<reference key="1">
    <citation type="journal article" date="2006" name="Genome Res.">
        <title>Massive genome erosion and functional adaptations provide insights into the symbiotic lifestyle of Sodalis glossinidius in the tsetse host.</title>
        <authorList>
            <person name="Toh H."/>
            <person name="Weiss B.L."/>
            <person name="Perkin S.A.H."/>
            <person name="Yamashita A."/>
            <person name="Oshima K."/>
            <person name="Hattori M."/>
            <person name="Aksoy S."/>
        </authorList>
    </citation>
    <scope>NUCLEOTIDE SEQUENCE [LARGE SCALE GENOMIC DNA]</scope>
    <source>
        <strain>morsitans</strain>
    </source>
</reference>
<sequence>MTLLALGINHKTAPVALRERVAFSPETLDQALGSLLAHPLVQGGVVLSTCNRTELYLSVEQQADLQEALVRWLCDYHQLEPDEVRQSLYWHLGDEAVSHLMRVASGLDSLVLGEPQILGQVKKAFAESRRGHGLSVDLERWFQKSFSVAKRVRTETEIGSHAVSVAFAACTLARQIFESLADVTVLLVGAGETIELVARHLREHKVKRLLIANRTPERAQRLAEDVGADVINLAEIDSQLGEADIIITSTASTLPIIGKGMVERALKQRRYQPMLLVDIAVPRDIEPEVAKLADAYLYTVDDLQAIIEKNLAQRKHAAVLAETIVAQESMDFMGWLRSQSAVEAIRDYRTQADSLREEFEARALAALRLGADPEQVVKDMAYKLTNRLIHTPTKSLQQAAREGDAERLQILRDGLGLDTH</sequence>
<evidence type="ECO:0000255" key="1">
    <source>
        <dbReference type="HAMAP-Rule" id="MF_00087"/>
    </source>
</evidence>
<protein>
    <recommendedName>
        <fullName evidence="1">Glutamyl-tRNA reductase</fullName>
        <shortName evidence="1">GluTR</shortName>
        <ecNumber evidence="1">1.2.1.70</ecNumber>
    </recommendedName>
</protein>
<gene>
    <name evidence="1" type="primary">hemA</name>
    <name type="ordered locus">SG1877</name>
</gene>
<proteinExistence type="inferred from homology"/>
<feature type="chain" id="PRO_1000004699" description="Glutamyl-tRNA reductase">
    <location>
        <begin position="1"/>
        <end position="420"/>
    </location>
</feature>
<feature type="active site" description="Nucleophile" evidence="1">
    <location>
        <position position="50"/>
    </location>
</feature>
<feature type="binding site" evidence="1">
    <location>
        <begin position="49"/>
        <end position="52"/>
    </location>
    <ligand>
        <name>substrate</name>
    </ligand>
</feature>
<feature type="binding site" evidence="1">
    <location>
        <position position="109"/>
    </location>
    <ligand>
        <name>substrate</name>
    </ligand>
</feature>
<feature type="binding site" evidence="1">
    <location>
        <begin position="114"/>
        <end position="116"/>
    </location>
    <ligand>
        <name>substrate</name>
    </ligand>
</feature>
<feature type="binding site" evidence="1">
    <location>
        <position position="120"/>
    </location>
    <ligand>
        <name>substrate</name>
    </ligand>
</feature>
<feature type="binding site" evidence="1">
    <location>
        <begin position="189"/>
        <end position="194"/>
    </location>
    <ligand>
        <name>NADP(+)</name>
        <dbReference type="ChEBI" id="CHEBI:58349"/>
    </ligand>
</feature>
<feature type="site" description="Important for activity" evidence="1">
    <location>
        <position position="99"/>
    </location>
</feature>
<accession>Q2NRS3</accession>
<keyword id="KW-0521">NADP</keyword>
<keyword id="KW-0560">Oxidoreductase</keyword>
<keyword id="KW-0627">Porphyrin biosynthesis</keyword>
<dbReference type="EC" id="1.2.1.70" evidence="1"/>
<dbReference type="EMBL" id="AP008232">
    <property type="protein sequence ID" value="BAE75152.1"/>
    <property type="molecule type" value="Genomic_DNA"/>
</dbReference>
<dbReference type="RefSeq" id="WP_011411821.1">
    <property type="nucleotide sequence ID" value="NC_007712.1"/>
</dbReference>
<dbReference type="SMR" id="Q2NRS3"/>
<dbReference type="STRING" id="343509.SG1877"/>
<dbReference type="KEGG" id="sgl:SG1877"/>
<dbReference type="eggNOG" id="COG0373">
    <property type="taxonomic scope" value="Bacteria"/>
</dbReference>
<dbReference type="HOGENOM" id="CLU_035113_2_2_6"/>
<dbReference type="OrthoDB" id="110209at2"/>
<dbReference type="BioCyc" id="SGLO343509:SGP1_RS17105-MONOMER"/>
<dbReference type="UniPathway" id="UPA00251">
    <property type="reaction ID" value="UER00316"/>
</dbReference>
<dbReference type="Proteomes" id="UP000001932">
    <property type="component" value="Chromosome"/>
</dbReference>
<dbReference type="GO" id="GO:0008883">
    <property type="term" value="F:glutamyl-tRNA reductase activity"/>
    <property type="evidence" value="ECO:0007669"/>
    <property type="project" value="UniProtKB-UniRule"/>
</dbReference>
<dbReference type="GO" id="GO:0050661">
    <property type="term" value="F:NADP binding"/>
    <property type="evidence" value="ECO:0007669"/>
    <property type="project" value="InterPro"/>
</dbReference>
<dbReference type="GO" id="GO:0019353">
    <property type="term" value="P:protoporphyrinogen IX biosynthetic process from glutamate"/>
    <property type="evidence" value="ECO:0007669"/>
    <property type="project" value="TreeGrafter"/>
</dbReference>
<dbReference type="CDD" id="cd05213">
    <property type="entry name" value="NAD_bind_Glutamyl_tRNA_reduct"/>
    <property type="match status" value="1"/>
</dbReference>
<dbReference type="FunFam" id="3.30.460.30:FF:000001">
    <property type="entry name" value="Glutamyl-tRNA reductase"/>
    <property type="match status" value="1"/>
</dbReference>
<dbReference type="FunFam" id="3.40.50.720:FF:000031">
    <property type="entry name" value="Glutamyl-tRNA reductase"/>
    <property type="match status" value="1"/>
</dbReference>
<dbReference type="Gene3D" id="3.30.460.30">
    <property type="entry name" value="Glutamyl-tRNA reductase, N-terminal domain"/>
    <property type="match status" value="1"/>
</dbReference>
<dbReference type="Gene3D" id="3.40.50.720">
    <property type="entry name" value="NAD(P)-binding Rossmann-like Domain"/>
    <property type="match status" value="1"/>
</dbReference>
<dbReference type="HAMAP" id="MF_00087">
    <property type="entry name" value="Glu_tRNA_reductase"/>
    <property type="match status" value="1"/>
</dbReference>
<dbReference type="InterPro" id="IPR000343">
    <property type="entry name" value="4pyrrol_synth_GluRdtase"/>
</dbReference>
<dbReference type="InterPro" id="IPR015896">
    <property type="entry name" value="4pyrrol_synth_GluRdtase_dimer"/>
</dbReference>
<dbReference type="InterPro" id="IPR015895">
    <property type="entry name" value="4pyrrol_synth_GluRdtase_N"/>
</dbReference>
<dbReference type="InterPro" id="IPR018214">
    <property type="entry name" value="GluRdtase_CS"/>
</dbReference>
<dbReference type="InterPro" id="IPR036453">
    <property type="entry name" value="GluRdtase_dimer_dom_sf"/>
</dbReference>
<dbReference type="InterPro" id="IPR036343">
    <property type="entry name" value="GluRdtase_N_sf"/>
</dbReference>
<dbReference type="InterPro" id="IPR036291">
    <property type="entry name" value="NAD(P)-bd_dom_sf"/>
</dbReference>
<dbReference type="InterPro" id="IPR006151">
    <property type="entry name" value="Shikm_DH/Glu-tRNA_Rdtase"/>
</dbReference>
<dbReference type="NCBIfam" id="TIGR01035">
    <property type="entry name" value="hemA"/>
    <property type="match status" value="1"/>
</dbReference>
<dbReference type="PANTHER" id="PTHR43013">
    <property type="entry name" value="GLUTAMYL-TRNA REDUCTASE"/>
    <property type="match status" value="1"/>
</dbReference>
<dbReference type="PANTHER" id="PTHR43013:SF1">
    <property type="entry name" value="GLUTAMYL-TRNA REDUCTASE"/>
    <property type="match status" value="1"/>
</dbReference>
<dbReference type="Pfam" id="PF00745">
    <property type="entry name" value="GlutR_dimer"/>
    <property type="match status" value="1"/>
</dbReference>
<dbReference type="Pfam" id="PF05201">
    <property type="entry name" value="GlutR_N"/>
    <property type="match status" value="1"/>
</dbReference>
<dbReference type="Pfam" id="PF01488">
    <property type="entry name" value="Shikimate_DH"/>
    <property type="match status" value="1"/>
</dbReference>
<dbReference type="PIRSF" id="PIRSF000445">
    <property type="entry name" value="4pyrrol_synth_GluRdtase"/>
    <property type="match status" value="1"/>
</dbReference>
<dbReference type="SUPFAM" id="SSF69742">
    <property type="entry name" value="Glutamyl tRNA-reductase catalytic, N-terminal domain"/>
    <property type="match status" value="1"/>
</dbReference>
<dbReference type="SUPFAM" id="SSF69075">
    <property type="entry name" value="Glutamyl tRNA-reductase dimerization domain"/>
    <property type="match status" value="1"/>
</dbReference>
<dbReference type="SUPFAM" id="SSF51735">
    <property type="entry name" value="NAD(P)-binding Rossmann-fold domains"/>
    <property type="match status" value="1"/>
</dbReference>
<dbReference type="PROSITE" id="PS00747">
    <property type="entry name" value="GLUTR"/>
    <property type="match status" value="1"/>
</dbReference>
<name>HEM1_SODGM</name>
<organism>
    <name type="scientific">Sodalis glossinidius (strain morsitans)</name>
    <dbReference type="NCBI Taxonomy" id="343509"/>
    <lineage>
        <taxon>Bacteria</taxon>
        <taxon>Pseudomonadati</taxon>
        <taxon>Pseudomonadota</taxon>
        <taxon>Gammaproteobacteria</taxon>
        <taxon>Enterobacterales</taxon>
        <taxon>Bruguierivoracaceae</taxon>
        <taxon>Sodalis</taxon>
    </lineage>
</organism>
<comment type="function">
    <text evidence="1">Catalyzes the NADPH-dependent reduction of glutamyl-tRNA(Glu) to glutamate 1-semialdehyde (GSA).</text>
</comment>
<comment type="catalytic activity">
    <reaction evidence="1">
        <text>(S)-4-amino-5-oxopentanoate + tRNA(Glu) + NADP(+) = L-glutamyl-tRNA(Glu) + NADPH + H(+)</text>
        <dbReference type="Rhea" id="RHEA:12344"/>
        <dbReference type="Rhea" id="RHEA-COMP:9663"/>
        <dbReference type="Rhea" id="RHEA-COMP:9680"/>
        <dbReference type="ChEBI" id="CHEBI:15378"/>
        <dbReference type="ChEBI" id="CHEBI:57501"/>
        <dbReference type="ChEBI" id="CHEBI:57783"/>
        <dbReference type="ChEBI" id="CHEBI:58349"/>
        <dbReference type="ChEBI" id="CHEBI:78442"/>
        <dbReference type="ChEBI" id="CHEBI:78520"/>
        <dbReference type="EC" id="1.2.1.70"/>
    </reaction>
</comment>
<comment type="pathway">
    <text evidence="1">Porphyrin-containing compound metabolism; protoporphyrin-IX biosynthesis; 5-aminolevulinate from L-glutamyl-tRNA(Glu): step 1/2.</text>
</comment>
<comment type="subunit">
    <text evidence="1">Homodimer.</text>
</comment>
<comment type="domain">
    <text evidence="1">Possesses an unusual extended V-shaped dimeric structure with each monomer consisting of three distinct domains arranged along a curved 'spinal' alpha-helix. The N-terminal catalytic domain specifically recognizes the glutamate moiety of the substrate. The second domain is the NADPH-binding domain, and the third C-terminal domain is responsible for dimerization.</text>
</comment>
<comment type="miscellaneous">
    <text evidence="1">During catalysis, the active site Cys acts as a nucleophile attacking the alpha-carbonyl group of tRNA-bound glutamate with the formation of a thioester intermediate between enzyme and glutamate, and the concomitant release of tRNA(Glu). The thioester intermediate is finally reduced by direct hydride transfer from NADPH, to form the product GSA.</text>
</comment>
<comment type="similarity">
    <text evidence="1">Belongs to the glutamyl-tRNA reductase family.</text>
</comment>